<comment type="function">
    <text evidence="1">Catalyzes quinol oxidation with the concomitant reduction of oxygen to water.</text>
</comment>
<comment type="catalytic activity">
    <reaction>
        <text>2 a quinol + O2 = 2 a quinone + 2 H2O</text>
        <dbReference type="Rhea" id="RHEA:55376"/>
        <dbReference type="ChEBI" id="CHEBI:15377"/>
        <dbReference type="ChEBI" id="CHEBI:15379"/>
        <dbReference type="ChEBI" id="CHEBI:24646"/>
        <dbReference type="ChEBI" id="CHEBI:132124"/>
    </reaction>
</comment>
<comment type="subcellular location">
    <subcellularLocation>
        <location evidence="1">Cell membrane</location>
        <topology evidence="1">Multi-pass membrane protein</topology>
    </subcellularLocation>
</comment>
<comment type="similarity">
    <text evidence="3">Belongs to the cytochrome c oxidase subunit 3 family.</text>
</comment>
<keyword id="KW-1003">Cell membrane</keyword>
<keyword id="KW-0472">Membrane</keyword>
<keyword id="KW-0560">Oxidoreductase</keyword>
<keyword id="KW-0812">Transmembrane</keyword>
<keyword id="KW-1133">Transmembrane helix</keyword>
<name>QOX3_STAAB</name>
<reference key="1">
    <citation type="journal article" date="2007" name="PLoS ONE">
        <title>Molecular correlates of host specialization in Staphylococcus aureus.</title>
        <authorList>
            <person name="Herron-Olson L."/>
            <person name="Fitzgerald J.R."/>
            <person name="Musser J.M."/>
            <person name="Kapur V."/>
        </authorList>
    </citation>
    <scope>NUCLEOTIDE SEQUENCE [LARGE SCALE GENOMIC DNA]</scope>
    <source>
        <strain>bovine RF122 / ET3-1</strain>
    </source>
</reference>
<gene>
    <name type="primary">qoxC</name>
    <name type="ordered locus">SAB0925c</name>
</gene>
<accession>Q2YX16</accession>
<protein>
    <recommendedName>
        <fullName>Probable quinol oxidase subunit 3</fullName>
        <ecNumber>1.10.3.-</ecNumber>
    </recommendedName>
    <alternativeName>
        <fullName>Quinol oxidase polypeptide III</fullName>
    </alternativeName>
</protein>
<feature type="chain" id="PRO_0000275884" description="Probable quinol oxidase subunit 3">
    <location>
        <begin position="1"/>
        <end position="201"/>
    </location>
</feature>
<feature type="transmembrane region" description="Helical" evidence="2">
    <location>
        <begin position="20"/>
        <end position="40"/>
    </location>
</feature>
<feature type="transmembrane region" description="Helical" evidence="2">
    <location>
        <begin position="62"/>
        <end position="82"/>
    </location>
</feature>
<feature type="transmembrane region" description="Helical" evidence="2">
    <location>
        <begin position="91"/>
        <end position="111"/>
    </location>
</feature>
<feature type="transmembrane region" description="Helical" evidence="2">
    <location>
        <begin position="133"/>
        <end position="153"/>
    </location>
</feature>
<feature type="transmembrane region" description="Helical" evidence="2">
    <location>
        <begin position="172"/>
        <end position="192"/>
    </location>
</feature>
<evidence type="ECO:0000250" key="1"/>
<evidence type="ECO:0000255" key="2"/>
<evidence type="ECO:0000305" key="3"/>
<sequence>MSHDTNTIDSRTHEGELNKLGFWIFITAEFALFGTLFATLLTLQHGGDYAGKMTTELFELPLVLIMTFALLFSSYTCGIAIYYMRQEKQKLMMFWMIITLLLGLVFVGFEIYEFAHYASEGVNPTIGSYWSSFFILLGTHGCHVSLGIVWAICLLIQIQRRGLDKYNAPKLFIVSLYWHFLDVVWVFIFTAVYMIGMVYSG</sequence>
<proteinExistence type="inferred from homology"/>
<dbReference type="EC" id="1.10.3.-"/>
<dbReference type="EMBL" id="AJ938182">
    <property type="protein sequence ID" value="CAI80613.1"/>
    <property type="molecule type" value="Genomic_DNA"/>
</dbReference>
<dbReference type="RefSeq" id="WP_000017736.1">
    <property type="nucleotide sequence ID" value="NC_007622.1"/>
</dbReference>
<dbReference type="SMR" id="Q2YX16"/>
<dbReference type="GeneID" id="66839255"/>
<dbReference type="KEGG" id="sab:SAB0925c"/>
<dbReference type="HOGENOM" id="CLU_044071_3_2_9"/>
<dbReference type="GO" id="GO:0005886">
    <property type="term" value="C:plasma membrane"/>
    <property type="evidence" value="ECO:0007669"/>
    <property type="project" value="UniProtKB-SubCell"/>
</dbReference>
<dbReference type="GO" id="GO:0004129">
    <property type="term" value="F:cytochrome-c oxidase activity"/>
    <property type="evidence" value="ECO:0007669"/>
    <property type="project" value="InterPro"/>
</dbReference>
<dbReference type="GO" id="GO:0019646">
    <property type="term" value="P:aerobic electron transport chain"/>
    <property type="evidence" value="ECO:0007669"/>
    <property type="project" value="InterPro"/>
</dbReference>
<dbReference type="GO" id="GO:0042773">
    <property type="term" value="P:ATP synthesis coupled electron transport"/>
    <property type="evidence" value="ECO:0007669"/>
    <property type="project" value="InterPro"/>
</dbReference>
<dbReference type="CDD" id="cd02863">
    <property type="entry name" value="Ubiquinol_oxidase_III"/>
    <property type="match status" value="1"/>
</dbReference>
<dbReference type="FunFam" id="1.20.120.80:FF:000001">
    <property type="entry name" value="Cytochrome (Ubi)quinol oxidase subunit III"/>
    <property type="match status" value="1"/>
</dbReference>
<dbReference type="Gene3D" id="1.20.120.80">
    <property type="entry name" value="Cytochrome c oxidase, subunit III, four-helix bundle"/>
    <property type="match status" value="1"/>
</dbReference>
<dbReference type="InterPro" id="IPR024791">
    <property type="entry name" value="Cyt_c/ubiquinol_Oxase_su3"/>
</dbReference>
<dbReference type="InterPro" id="IPR000298">
    <property type="entry name" value="Cyt_c_oxidase-like_su3"/>
</dbReference>
<dbReference type="InterPro" id="IPR035973">
    <property type="entry name" value="Cyt_c_oxidase_su3-like_sf"/>
</dbReference>
<dbReference type="InterPro" id="IPR013833">
    <property type="entry name" value="Cyt_c_oxidase_su3_a-hlx"/>
</dbReference>
<dbReference type="InterPro" id="IPR014246">
    <property type="entry name" value="QoxC"/>
</dbReference>
<dbReference type="InterPro" id="IPR033946">
    <property type="entry name" value="Ubiquinol_oxase_su3_dom"/>
</dbReference>
<dbReference type="NCBIfam" id="TIGR02897">
    <property type="entry name" value="QoxC"/>
    <property type="match status" value="1"/>
</dbReference>
<dbReference type="PANTHER" id="PTHR11403:SF2">
    <property type="entry name" value="CYTOCHROME BO(3) UBIQUINOL OXIDASE SUBUNIT 3"/>
    <property type="match status" value="1"/>
</dbReference>
<dbReference type="PANTHER" id="PTHR11403">
    <property type="entry name" value="CYTOCHROME C OXIDASE SUBUNIT III"/>
    <property type="match status" value="1"/>
</dbReference>
<dbReference type="Pfam" id="PF00510">
    <property type="entry name" value="COX3"/>
    <property type="match status" value="1"/>
</dbReference>
<dbReference type="SUPFAM" id="SSF81452">
    <property type="entry name" value="Cytochrome c oxidase subunit III-like"/>
    <property type="match status" value="1"/>
</dbReference>
<dbReference type="PROSITE" id="PS50253">
    <property type="entry name" value="COX3"/>
    <property type="match status" value="1"/>
</dbReference>
<organism>
    <name type="scientific">Staphylococcus aureus (strain bovine RF122 / ET3-1)</name>
    <dbReference type="NCBI Taxonomy" id="273036"/>
    <lineage>
        <taxon>Bacteria</taxon>
        <taxon>Bacillati</taxon>
        <taxon>Bacillota</taxon>
        <taxon>Bacilli</taxon>
        <taxon>Bacillales</taxon>
        <taxon>Staphylococcaceae</taxon>
        <taxon>Staphylococcus</taxon>
    </lineage>
</organism>